<reference key="1">
    <citation type="journal article" date="1995" name="Arch. Pathol. Lab. Med.">
        <title>Rapid Mycobacterium species assignment and unambiguous identification of mutations associated with antimicrobial resistance in Mycobacterium tuberculosis by automated DNA sequencing.</title>
        <authorList>
            <person name="Kapur V."/>
            <person name="Li L.L."/>
            <person name="Hamrick M.R."/>
            <person name="Plikaytis B.B."/>
            <person name="Shinnick T.M."/>
            <person name="Telenti A."/>
            <person name="Jacobs W.R. Jr."/>
            <person name="Banerjee A."/>
            <person name="Cole S."/>
            <person name="Yuen K.Y."/>
            <person name="Clarridge J.E."/>
            <person name="Kreiswirth B.N."/>
            <person name="Musser J.M."/>
        </authorList>
    </citation>
    <scope>NUCLEOTIDE SEQUENCE [GENOMIC DNA]</scope>
    <source>
        <strain>559</strain>
    </source>
</reference>
<feature type="chain" id="PRO_0000063427" description="Chaperonin GroEL">
    <location>
        <begin position="1" status="less than"/>
        <end position="120" status="greater than"/>
    </location>
</feature>
<feature type="binding site" evidence="1">
    <location>
        <begin position="23"/>
        <end position="27"/>
    </location>
    <ligand>
        <name>ATP</name>
        <dbReference type="ChEBI" id="CHEBI:30616"/>
    </ligand>
</feature>
<feature type="non-terminal residue">
    <location>
        <position position="1"/>
    </location>
</feature>
<feature type="non-terminal residue">
    <location>
        <position position="120"/>
    </location>
</feature>
<organism>
    <name type="scientific">Mycolicibacterium fallax</name>
    <name type="common">Mycobacterium fallax</name>
    <dbReference type="NCBI Taxonomy" id="1793"/>
    <lineage>
        <taxon>Bacteria</taxon>
        <taxon>Bacillati</taxon>
        <taxon>Actinomycetota</taxon>
        <taxon>Actinomycetes</taxon>
        <taxon>Mycobacteriales</taxon>
        <taxon>Mycobacteriaceae</taxon>
        <taxon>Mycolicibacterium</taxon>
    </lineage>
</organism>
<sequence length="120" mass="12296">PYEKIGAELVKEVAKKTDDVAGDGTTTATVLAQALVREGLRNVAAGANPLGLKRGIEKAVEKVSSTLLASAKEVETKEQIAATAGISAGDQTIGDLIAEAMDKVGNEGVITVEESNTFGL</sequence>
<evidence type="ECO:0000255" key="1">
    <source>
        <dbReference type="HAMAP-Rule" id="MF_00600"/>
    </source>
</evidence>
<evidence type="ECO:0000305" key="2"/>
<protein>
    <recommendedName>
        <fullName evidence="1">Chaperonin GroEL</fullName>
        <ecNumber evidence="1">5.6.1.7</ecNumber>
    </recommendedName>
    <alternativeName>
        <fullName evidence="1">60 kDa chaperonin</fullName>
    </alternativeName>
    <alternativeName>
        <fullName evidence="1">Chaperonin-60</fullName>
        <shortName evidence="1">Cpn60</shortName>
    </alternativeName>
</protein>
<comment type="function">
    <text evidence="1">Together with its co-chaperonin GroES, plays an essential role in assisting protein folding. The GroEL-GroES system forms a nano-cage that allows encapsulation of the non-native substrate proteins and provides a physical environment optimized to promote and accelerate protein folding.</text>
</comment>
<comment type="catalytic activity">
    <reaction evidence="1">
        <text>ATP + H2O + a folded polypeptide = ADP + phosphate + an unfolded polypeptide.</text>
        <dbReference type="EC" id="5.6.1.7"/>
    </reaction>
</comment>
<comment type="subunit">
    <text evidence="1">Forms a cylinder of 14 subunits composed of two heptameric rings stacked back-to-back. Interacts with the co-chaperonin GroES.</text>
</comment>
<comment type="subcellular location">
    <subcellularLocation>
        <location evidence="1">Cytoplasm</location>
    </subcellularLocation>
</comment>
<comment type="similarity">
    <text evidence="1 2">Belongs to the chaperonin (HSP60) family.</text>
</comment>
<proteinExistence type="inferred from homology"/>
<gene>
    <name evidence="1" type="primary">groEL</name>
    <name evidence="1" type="synonym">groL</name>
    <name type="synonym">mopA</name>
</gene>
<accession>Q49155</accession>
<dbReference type="EC" id="5.6.1.7" evidence="1"/>
<dbReference type="EMBL" id="U17930">
    <property type="protein sequence ID" value="AAB39049.1"/>
    <property type="molecule type" value="Genomic_DNA"/>
</dbReference>
<dbReference type="SMR" id="Q49155"/>
<dbReference type="STRING" id="1793.AWC04_11165"/>
<dbReference type="GO" id="GO:0005737">
    <property type="term" value="C:cytoplasm"/>
    <property type="evidence" value="ECO:0007669"/>
    <property type="project" value="UniProtKB-SubCell"/>
</dbReference>
<dbReference type="GO" id="GO:0005524">
    <property type="term" value="F:ATP binding"/>
    <property type="evidence" value="ECO:0007669"/>
    <property type="project" value="UniProtKB-KW"/>
</dbReference>
<dbReference type="GO" id="GO:0140662">
    <property type="term" value="F:ATP-dependent protein folding chaperone"/>
    <property type="evidence" value="ECO:0007669"/>
    <property type="project" value="InterPro"/>
</dbReference>
<dbReference type="GO" id="GO:0016853">
    <property type="term" value="F:isomerase activity"/>
    <property type="evidence" value="ECO:0007669"/>
    <property type="project" value="UniProtKB-KW"/>
</dbReference>
<dbReference type="GO" id="GO:0042026">
    <property type="term" value="P:protein refolding"/>
    <property type="evidence" value="ECO:0007669"/>
    <property type="project" value="InterPro"/>
</dbReference>
<dbReference type="Gene3D" id="1.10.560.10">
    <property type="entry name" value="GroEL-like equatorial domain"/>
    <property type="match status" value="1"/>
</dbReference>
<dbReference type="Gene3D" id="3.30.260.10">
    <property type="entry name" value="TCP-1-like chaperonin intermediate domain"/>
    <property type="match status" value="1"/>
</dbReference>
<dbReference type="InterPro" id="IPR001844">
    <property type="entry name" value="Cpn60/GroEL"/>
</dbReference>
<dbReference type="InterPro" id="IPR002423">
    <property type="entry name" value="Cpn60/GroEL/TCP-1"/>
</dbReference>
<dbReference type="InterPro" id="IPR027413">
    <property type="entry name" value="GROEL-like_equatorial_sf"/>
</dbReference>
<dbReference type="InterPro" id="IPR027410">
    <property type="entry name" value="TCP-1-like_intermed_sf"/>
</dbReference>
<dbReference type="PANTHER" id="PTHR45633">
    <property type="entry name" value="60 KDA HEAT SHOCK PROTEIN, MITOCHONDRIAL"/>
    <property type="match status" value="1"/>
</dbReference>
<dbReference type="Pfam" id="PF00118">
    <property type="entry name" value="Cpn60_TCP1"/>
    <property type="match status" value="1"/>
</dbReference>
<dbReference type="SUPFAM" id="SSF48592">
    <property type="entry name" value="GroEL equatorial domain-like"/>
    <property type="match status" value="1"/>
</dbReference>
<keyword id="KW-0067">ATP-binding</keyword>
<keyword id="KW-0143">Chaperone</keyword>
<keyword id="KW-0963">Cytoplasm</keyword>
<keyword id="KW-0413">Isomerase</keyword>
<keyword id="KW-0547">Nucleotide-binding</keyword>
<keyword id="KW-0346">Stress response</keyword>
<name>CH60_MYCFA</name>